<proteinExistence type="inferred from homology"/>
<keyword id="KW-0066">ATP synthesis</keyword>
<keyword id="KW-0067">ATP-binding</keyword>
<keyword id="KW-0997">Cell inner membrane</keyword>
<keyword id="KW-1003">Cell membrane</keyword>
<keyword id="KW-0139">CF(1)</keyword>
<keyword id="KW-0375">Hydrogen ion transport</keyword>
<keyword id="KW-0406">Ion transport</keyword>
<keyword id="KW-0472">Membrane</keyword>
<keyword id="KW-0547">Nucleotide-binding</keyword>
<keyword id="KW-1278">Translocase</keyword>
<keyword id="KW-0813">Transport</keyword>
<sequence>MTTAKSGTTIEIIGAVVDVEFPRHAVPKVYDALQVDENNLTLEVQQQLGDGVVRTIAMGSTEGLKRDIAVKNTEKPIEVPVGKETLGRIMNVLGEPIDELGPINSKEKLPIHRPAPSFIEQSGTTELLETGIKVVDLLCPFAKGGKVGLFGGAGVGKTVNMMELIRNIAIEHSGYSVFAGVGERTREGNDFYHEMKESNVLDKVALVYGQMNEPPGNRLRVGLTGLTLAEAFRDEGRDVLLFIDNIFRYTLAGVEVSALLGRMPSAVGYQPTLAEEMGALQERITSTKKGSITSIQAVYVPADDLTDPSPATTFAHLDATVVLSRQIAERGIYPAIDPLDSTSRQLDPLIIGEEHYRVARGVQETLQRYEELKDIIAILGMDELSEDDKRAVRRARKIQRFLSQPFFVAEVFTGAPGKYVSLQDTIRGFKGIINGEYDELPEQAFYMVGSIEEAVEKAKSL</sequence>
<protein>
    <recommendedName>
        <fullName evidence="1">ATP synthase subunit beta</fullName>
        <ecNumber evidence="1">7.1.2.2</ecNumber>
    </recommendedName>
    <alternativeName>
        <fullName evidence="1">ATP synthase F1 sector subunit beta</fullName>
    </alternativeName>
    <alternativeName>
        <fullName evidence="1">F-ATPase subunit beta</fullName>
    </alternativeName>
</protein>
<organism>
    <name type="scientific">Coxiella burnetii (strain RSA 331 / Henzerling II)</name>
    <dbReference type="NCBI Taxonomy" id="360115"/>
    <lineage>
        <taxon>Bacteria</taxon>
        <taxon>Pseudomonadati</taxon>
        <taxon>Pseudomonadota</taxon>
        <taxon>Gammaproteobacteria</taxon>
        <taxon>Legionellales</taxon>
        <taxon>Coxiellaceae</taxon>
        <taxon>Coxiella</taxon>
    </lineage>
</organism>
<comment type="function">
    <text evidence="1">Produces ATP from ADP in the presence of a proton gradient across the membrane. The catalytic sites are hosted primarily by the beta subunits.</text>
</comment>
<comment type="catalytic activity">
    <reaction evidence="1">
        <text>ATP + H2O + 4 H(+)(in) = ADP + phosphate + 5 H(+)(out)</text>
        <dbReference type="Rhea" id="RHEA:57720"/>
        <dbReference type="ChEBI" id="CHEBI:15377"/>
        <dbReference type="ChEBI" id="CHEBI:15378"/>
        <dbReference type="ChEBI" id="CHEBI:30616"/>
        <dbReference type="ChEBI" id="CHEBI:43474"/>
        <dbReference type="ChEBI" id="CHEBI:456216"/>
        <dbReference type="EC" id="7.1.2.2"/>
    </reaction>
</comment>
<comment type="subunit">
    <text evidence="1">F-type ATPases have 2 components, CF(1) - the catalytic core - and CF(0) - the membrane proton channel. CF(1) has five subunits: alpha(3), beta(3), gamma(1), delta(1), epsilon(1). CF(0) has three main subunits: a(1), b(2) and c(9-12). The alpha and beta chains form an alternating ring which encloses part of the gamma chain. CF(1) is attached to CF(0) by a central stalk formed by the gamma and epsilon chains, while a peripheral stalk is formed by the delta and b chains.</text>
</comment>
<comment type="subcellular location">
    <subcellularLocation>
        <location evidence="1">Cell inner membrane</location>
        <topology evidence="1">Peripheral membrane protein</topology>
    </subcellularLocation>
</comment>
<comment type="similarity">
    <text evidence="1">Belongs to the ATPase alpha/beta chains family.</text>
</comment>
<name>ATPB_COXBR</name>
<feature type="chain" id="PRO_1000086908" description="ATP synthase subunit beta">
    <location>
        <begin position="1"/>
        <end position="461"/>
    </location>
</feature>
<feature type="binding site" evidence="1">
    <location>
        <begin position="151"/>
        <end position="158"/>
    </location>
    <ligand>
        <name>ATP</name>
        <dbReference type="ChEBI" id="CHEBI:30616"/>
    </ligand>
</feature>
<evidence type="ECO:0000255" key="1">
    <source>
        <dbReference type="HAMAP-Rule" id="MF_01347"/>
    </source>
</evidence>
<accession>A9NBD0</accession>
<gene>
    <name evidence="1" type="primary">atpD</name>
    <name type="ordered locus">COXBURSA331_A2148</name>
</gene>
<reference key="1">
    <citation type="submission" date="2007-11" db="EMBL/GenBank/DDBJ databases">
        <title>Genome sequencing of phylogenetically and phenotypically diverse Coxiella burnetii isolates.</title>
        <authorList>
            <person name="Seshadri R."/>
            <person name="Samuel J.E."/>
        </authorList>
    </citation>
    <scope>NUCLEOTIDE SEQUENCE [LARGE SCALE GENOMIC DNA]</scope>
    <source>
        <strain>RSA 331 / Henzerling II</strain>
    </source>
</reference>
<dbReference type="EC" id="7.1.2.2" evidence="1"/>
<dbReference type="EMBL" id="CP000890">
    <property type="protein sequence ID" value="ABX77661.1"/>
    <property type="molecule type" value="Genomic_DNA"/>
</dbReference>
<dbReference type="SMR" id="A9NBD0"/>
<dbReference type="KEGG" id="cbs:COXBURSA331_A2148"/>
<dbReference type="HOGENOM" id="CLU_022398_0_2_6"/>
<dbReference type="GO" id="GO:0005886">
    <property type="term" value="C:plasma membrane"/>
    <property type="evidence" value="ECO:0007669"/>
    <property type="project" value="UniProtKB-SubCell"/>
</dbReference>
<dbReference type="GO" id="GO:0045259">
    <property type="term" value="C:proton-transporting ATP synthase complex"/>
    <property type="evidence" value="ECO:0007669"/>
    <property type="project" value="UniProtKB-KW"/>
</dbReference>
<dbReference type="GO" id="GO:0005524">
    <property type="term" value="F:ATP binding"/>
    <property type="evidence" value="ECO:0007669"/>
    <property type="project" value="UniProtKB-UniRule"/>
</dbReference>
<dbReference type="GO" id="GO:0016887">
    <property type="term" value="F:ATP hydrolysis activity"/>
    <property type="evidence" value="ECO:0007669"/>
    <property type="project" value="InterPro"/>
</dbReference>
<dbReference type="GO" id="GO:0046933">
    <property type="term" value="F:proton-transporting ATP synthase activity, rotational mechanism"/>
    <property type="evidence" value="ECO:0007669"/>
    <property type="project" value="UniProtKB-UniRule"/>
</dbReference>
<dbReference type="CDD" id="cd18110">
    <property type="entry name" value="ATP-synt_F1_beta_C"/>
    <property type="match status" value="1"/>
</dbReference>
<dbReference type="CDD" id="cd18115">
    <property type="entry name" value="ATP-synt_F1_beta_N"/>
    <property type="match status" value="1"/>
</dbReference>
<dbReference type="CDD" id="cd01133">
    <property type="entry name" value="F1-ATPase_beta_CD"/>
    <property type="match status" value="1"/>
</dbReference>
<dbReference type="FunFam" id="1.10.1140.10:FF:000001">
    <property type="entry name" value="ATP synthase subunit beta"/>
    <property type="match status" value="1"/>
</dbReference>
<dbReference type="FunFam" id="3.40.50.300:FF:000004">
    <property type="entry name" value="ATP synthase subunit beta"/>
    <property type="match status" value="1"/>
</dbReference>
<dbReference type="Gene3D" id="2.40.10.170">
    <property type="match status" value="1"/>
</dbReference>
<dbReference type="Gene3D" id="1.10.1140.10">
    <property type="entry name" value="Bovine Mitochondrial F1-atpase, Atp Synthase Beta Chain, Chain D, domain 3"/>
    <property type="match status" value="1"/>
</dbReference>
<dbReference type="Gene3D" id="3.40.50.300">
    <property type="entry name" value="P-loop containing nucleotide triphosphate hydrolases"/>
    <property type="match status" value="1"/>
</dbReference>
<dbReference type="HAMAP" id="MF_01347">
    <property type="entry name" value="ATP_synth_beta_bact"/>
    <property type="match status" value="1"/>
</dbReference>
<dbReference type="InterPro" id="IPR003593">
    <property type="entry name" value="AAA+_ATPase"/>
</dbReference>
<dbReference type="InterPro" id="IPR055190">
    <property type="entry name" value="ATP-synt_VA_C"/>
</dbReference>
<dbReference type="InterPro" id="IPR005722">
    <property type="entry name" value="ATP_synth_F1_bsu"/>
</dbReference>
<dbReference type="InterPro" id="IPR020003">
    <property type="entry name" value="ATPase_a/bsu_AS"/>
</dbReference>
<dbReference type="InterPro" id="IPR050053">
    <property type="entry name" value="ATPase_alpha/beta_chains"/>
</dbReference>
<dbReference type="InterPro" id="IPR004100">
    <property type="entry name" value="ATPase_F1/V1/A1_a/bsu_N"/>
</dbReference>
<dbReference type="InterPro" id="IPR036121">
    <property type="entry name" value="ATPase_F1/V1/A1_a/bsu_N_sf"/>
</dbReference>
<dbReference type="InterPro" id="IPR000194">
    <property type="entry name" value="ATPase_F1/V1/A1_a/bsu_nucl-bd"/>
</dbReference>
<dbReference type="InterPro" id="IPR024034">
    <property type="entry name" value="ATPase_F1/V1_b/a_C"/>
</dbReference>
<dbReference type="InterPro" id="IPR027417">
    <property type="entry name" value="P-loop_NTPase"/>
</dbReference>
<dbReference type="NCBIfam" id="TIGR01039">
    <property type="entry name" value="atpD"/>
    <property type="match status" value="1"/>
</dbReference>
<dbReference type="PANTHER" id="PTHR15184">
    <property type="entry name" value="ATP SYNTHASE"/>
    <property type="match status" value="1"/>
</dbReference>
<dbReference type="PANTHER" id="PTHR15184:SF71">
    <property type="entry name" value="ATP SYNTHASE SUBUNIT BETA, MITOCHONDRIAL"/>
    <property type="match status" value="1"/>
</dbReference>
<dbReference type="Pfam" id="PF00006">
    <property type="entry name" value="ATP-synt_ab"/>
    <property type="match status" value="1"/>
</dbReference>
<dbReference type="Pfam" id="PF02874">
    <property type="entry name" value="ATP-synt_ab_N"/>
    <property type="match status" value="1"/>
</dbReference>
<dbReference type="Pfam" id="PF22919">
    <property type="entry name" value="ATP-synt_VA_C"/>
    <property type="match status" value="1"/>
</dbReference>
<dbReference type="SMART" id="SM00382">
    <property type="entry name" value="AAA"/>
    <property type="match status" value="1"/>
</dbReference>
<dbReference type="SUPFAM" id="SSF47917">
    <property type="entry name" value="C-terminal domain of alpha and beta subunits of F1 ATP synthase"/>
    <property type="match status" value="1"/>
</dbReference>
<dbReference type="SUPFAM" id="SSF50615">
    <property type="entry name" value="N-terminal domain of alpha and beta subunits of F1 ATP synthase"/>
    <property type="match status" value="1"/>
</dbReference>
<dbReference type="SUPFAM" id="SSF52540">
    <property type="entry name" value="P-loop containing nucleoside triphosphate hydrolases"/>
    <property type="match status" value="1"/>
</dbReference>
<dbReference type="PROSITE" id="PS00152">
    <property type="entry name" value="ATPASE_ALPHA_BETA"/>
    <property type="match status" value="1"/>
</dbReference>